<dbReference type="EMBL" id="CP001048">
    <property type="protein sequence ID" value="ACC91094.1"/>
    <property type="molecule type" value="Genomic_DNA"/>
</dbReference>
<dbReference type="RefSeq" id="WP_011193341.1">
    <property type="nucleotide sequence ID" value="NZ_CP009780.1"/>
</dbReference>
<dbReference type="SMR" id="B2K7H2"/>
<dbReference type="KEGG" id="ypb:YPTS_4148"/>
<dbReference type="PATRIC" id="fig|502801.10.peg.3621"/>
<dbReference type="GO" id="GO:0005737">
    <property type="term" value="C:cytoplasm"/>
    <property type="evidence" value="ECO:0007669"/>
    <property type="project" value="UniProtKB-SubCell"/>
</dbReference>
<dbReference type="GO" id="GO:0097163">
    <property type="term" value="F:sulfur carrier activity"/>
    <property type="evidence" value="ECO:0007669"/>
    <property type="project" value="UniProtKB-UniRule"/>
</dbReference>
<dbReference type="GO" id="GO:0016783">
    <property type="term" value="F:sulfurtransferase activity"/>
    <property type="evidence" value="ECO:0007669"/>
    <property type="project" value="InterPro"/>
</dbReference>
<dbReference type="GO" id="GO:0006777">
    <property type="term" value="P:Mo-molybdopterin cofactor biosynthetic process"/>
    <property type="evidence" value="ECO:0007669"/>
    <property type="project" value="UniProtKB-UniRule"/>
</dbReference>
<dbReference type="Gene3D" id="3.10.20.10">
    <property type="match status" value="1"/>
</dbReference>
<dbReference type="Gene3D" id="3.40.140.10">
    <property type="entry name" value="Cytidine Deaminase, domain 2"/>
    <property type="match status" value="1"/>
</dbReference>
<dbReference type="HAMAP" id="MF_00187">
    <property type="entry name" value="FdhD"/>
    <property type="match status" value="1"/>
</dbReference>
<dbReference type="InterPro" id="IPR016193">
    <property type="entry name" value="Cytidine_deaminase-like"/>
</dbReference>
<dbReference type="InterPro" id="IPR003786">
    <property type="entry name" value="FdhD"/>
</dbReference>
<dbReference type="NCBIfam" id="TIGR00129">
    <property type="entry name" value="fdhD_narQ"/>
    <property type="match status" value="1"/>
</dbReference>
<dbReference type="PANTHER" id="PTHR30592">
    <property type="entry name" value="FORMATE DEHYDROGENASE"/>
    <property type="match status" value="1"/>
</dbReference>
<dbReference type="PANTHER" id="PTHR30592:SF1">
    <property type="entry name" value="SULFUR CARRIER PROTEIN FDHD"/>
    <property type="match status" value="1"/>
</dbReference>
<dbReference type="Pfam" id="PF02634">
    <property type="entry name" value="FdhD-NarQ"/>
    <property type="match status" value="1"/>
</dbReference>
<dbReference type="PIRSF" id="PIRSF015626">
    <property type="entry name" value="FdhD"/>
    <property type="match status" value="1"/>
</dbReference>
<dbReference type="SUPFAM" id="SSF53927">
    <property type="entry name" value="Cytidine deaminase-like"/>
    <property type="match status" value="1"/>
</dbReference>
<protein>
    <recommendedName>
        <fullName evidence="1">Sulfur carrier protein FdhD</fullName>
    </recommendedName>
</protein>
<sequence>MSQIKPSRLSSSAEIRGARQLDVLQRHKLAEPQQDWLAEEVPVALVYNGISHVVMMATPKDLAAFALGFSLSEGIISSPQDIYAIEMTPGCNGIEVNIELSSRRFAGLKERRRAMAGRTGCGVCGIEQLDDIFRPITPLPFTQAFNLEHLDTALAQLKQVQPVGQLTGCTHAAAWINPEGELLGGCEDVGRHVALDKLLGIRAKQPWQQGAVLVSSRASYEMVQKTAMCGAEILFAVSAATTLAVEVAERCNLTLVGFSKPGRATVYTHPQRIK</sequence>
<reference key="1">
    <citation type="submission" date="2008-04" db="EMBL/GenBank/DDBJ databases">
        <title>Complete sequence of Yersinia pseudotuberculosis PB1/+.</title>
        <authorList>
            <person name="Copeland A."/>
            <person name="Lucas S."/>
            <person name="Lapidus A."/>
            <person name="Glavina del Rio T."/>
            <person name="Dalin E."/>
            <person name="Tice H."/>
            <person name="Bruce D."/>
            <person name="Goodwin L."/>
            <person name="Pitluck S."/>
            <person name="Munk A.C."/>
            <person name="Brettin T."/>
            <person name="Detter J.C."/>
            <person name="Han C."/>
            <person name="Tapia R."/>
            <person name="Schmutz J."/>
            <person name="Larimer F."/>
            <person name="Land M."/>
            <person name="Hauser L."/>
            <person name="Challacombe J.F."/>
            <person name="Green L."/>
            <person name="Lindler L.E."/>
            <person name="Nikolich M.P."/>
            <person name="Richardson P."/>
        </authorList>
    </citation>
    <scope>NUCLEOTIDE SEQUENCE [LARGE SCALE GENOMIC DNA]</scope>
    <source>
        <strain>PB1/+</strain>
    </source>
</reference>
<name>FDHD_YERPB</name>
<comment type="function">
    <text evidence="1">Required for formate dehydrogenase (FDH) activity. Acts as a sulfur carrier protein that transfers sulfur from IscS to the molybdenum cofactor prior to its insertion into FDH.</text>
</comment>
<comment type="subcellular location">
    <subcellularLocation>
        <location evidence="1">Cytoplasm</location>
    </subcellularLocation>
</comment>
<comment type="similarity">
    <text evidence="1">Belongs to the FdhD family.</text>
</comment>
<keyword id="KW-0963">Cytoplasm</keyword>
<keyword id="KW-0501">Molybdenum cofactor biosynthesis</keyword>
<evidence type="ECO:0000255" key="1">
    <source>
        <dbReference type="HAMAP-Rule" id="MF_00187"/>
    </source>
</evidence>
<proteinExistence type="inferred from homology"/>
<organism>
    <name type="scientific">Yersinia pseudotuberculosis serotype IB (strain PB1/+)</name>
    <dbReference type="NCBI Taxonomy" id="502801"/>
    <lineage>
        <taxon>Bacteria</taxon>
        <taxon>Pseudomonadati</taxon>
        <taxon>Pseudomonadota</taxon>
        <taxon>Gammaproteobacteria</taxon>
        <taxon>Enterobacterales</taxon>
        <taxon>Yersiniaceae</taxon>
        <taxon>Yersinia</taxon>
    </lineage>
</organism>
<feature type="chain" id="PRO_1000098795" description="Sulfur carrier protein FdhD">
    <location>
        <begin position="1"/>
        <end position="274"/>
    </location>
</feature>
<feature type="active site" description="Cysteine persulfide intermediate" evidence="1">
    <location>
        <position position="121"/>
    </location>
</feature>
<feature type="binding site" evidence="1">
    <location>
        <begin position="258"/>
        <end position="263"/>
    </location>
    <ligand>
        <name>Mo-bis(molybdopterin guanine dinucleotide)</name>
        <dbReference type="ChEBI" id="CHEBI:60539"/>
    </ligand>
</feature>
<gene>
    <name evidence="1" type="primary">fdhD</name>
    <name type="ordered locus">YPTS_4148</name>
</gene>
<accession>B2K7H2</accession>